<keyword id="KW-1185">Reference proteome</keyword>
<keyword id="KW-0687">Ribonucleoprotein</keyword>
<keyword id="KW-0689">Ribosomal protein</keyword>
<keyword id="KW-0694">RNA-binding</keyword>
<keyword id="KW-0699">rRNA-binding</keyword>
<proteinExistence type="inferred from homology"/>
<reference key="1">
    <citation type="journal article" date="2006" name="Science">
        <title>A small microbial genome: the end of a long symbiotic relationship?</title>
        <authorList>
            <person name="Perez-Brocal V."/>
            <person name="Gil R."/>
            <person name="Ramos S."/>
            <person name="Lamelas A."/>
            <person name="Postigo M."/>
            <person name="Michelena J.M."/>
            <person name="Silva F.J."/>
            <person name="Moya A."/>
            <person name="Latorre A."/>
        </authorList>
    </citation>
    <scope>NUCLEOTIDE SEQUENCE [LARGE SCALE GENOMIC DNA]</scope>
    <source>
        <strain>Cc</strain>
    </source>
</reference>
<organism>
    <name type="scientific">Buchnera aphidicola subsp. Cinara cedri (strain Cc)</name>
    <dbReference type="NCBI Taxonomy" id="372461"/>
    <lineage>
        <taxon>Bacteria</taxon>
        <taxon>Pseudomonadati</taxon>
        <taxon>Pseudomonadota</taxon>
        <taxon>Gammaproteobacteria</taxon>
        <taxon>Enterobacterales</taxon>
        <taxon>Erwiniaceae</taxon>
        <taxon>Buchnera</taxon>
    </lineage>
</organism>
<comment type="function">
    <text evidence="1">One of two assembly initiator proteins, it binds directly to the 5'-end of the 23S rRNA, where it nucleates assembly of the 50S subunit.</text>
</comment>
<comment type="function">
    <text evidence="1">One of the proteins that surrounds the polypeptide exit tunnel on the outside of the subunit.</text>
</comment>
<comment type="subunit">
    <text evidence="1">Part of the 50S ribosomal subunit.</text>
</comment>
<comment type="similarity">
    <text evidence="1">Belongs to the universal ribosomal protein uL24 family.</text>
</comment>
<gene>
    <name evidence="1" type="primary">rplX</name>
    <name type="ordered locus">BCc_330</name>
</gene>
<accession>Q057B5</accession>
<evidence type="ECO:0000255" key="1">
    <source>
        <dbReference type="HAMAP-Rule" id="MF_01326"/>
    </source>
</evidence>
<evidence type="ECO:0000305" key="2"/>
<dbReference type="EMBL" id="CP000263">
    <property type="protein sequence ID" value="ABJ90784.1"/>
    <property type="molecule type" value="Genomic_DNA"/>
</dbReference>
<dbReference type="RefSeq" id="WP_011672703.1">
    <property type="nucleotide sequence ID" value="NC_008513.1"/>
</dbReference>
<dbReference type="SMR" id="Q057B5"/>
<dbReference type="STRING" id="372461.BCc_330"/>
<dbReference type="KEGG" id="bcc:BCc_330"/>
<dbReference type="eggNOG" id="COG0198">
    <property type="taxonomic scope" value="Bacteria"/>
</dbReference>
<dbReference type="HOGENOM" id="CLU_093315_2_2_6"/>
<dbReference type="OrthoDB" id="9807419at2"/>
<dbReference type="Proteomes" id="UP000000669">
    <property type="component" value="Chromosome"/>
</dbReference>
<dbReference type="GO" id="GO:1990904">
    <property type="term" value="C:ribonucleoprotein complex"/>
    <property type="evidence" value="ECO:0007669"/>
    <property type="project" value="UniProtKB-KW"/>
</dbReference>
<dbReference type="GO" id="GO:0005840">
    <property type="term" value="C:ribosome"/>
    <property type="evidence" value="ECO:0007669"/>
    <property type="project" value="UniProtKB-KW"/>
</dbReference>
<dbReference type="GO" id="GO:0019843">
    <property type="term" value="F:rRNA binding"/>
    <property type="evidence" value="ECO:0007669"/>
    <property type="project" value="UniProtKB-UniRule"/>
</dbReference>
<dbReference type="GO" id="GO:0003735">
    <property type="term" value="F:structural constituent of ribosome"/>
    <property type="evidence" value="ECO:0007669"/>
    <property type="project" value="InterPro"/>
</dbReference>
<dbReference type="GO" id="GO:0006412">
    <property type="term" value="P:translation"/>
    <property type="evidence" value="ECO:0007669"/>
    <property type="project" value="UniProtKB-UniRule"/>
</dbReference>
<dbReference type="CDD" id="cd06089">
    <property type="entry name" value="KOW_RPL26"/>
    <property type="match status" value="1"/>
</dbReference>
<dbReference type="Gene3D" id="2.30.30.30">
    <property type="match status" value="1"/>
</dbReference>
<dbReference type="HAMAP" id="MF_01326_B">
    <property type="entry name" value="Ribosomal_uL24_B"/>
    <property type="match status" value="1"/>
</dbReference>
<dbReference type="InterPro" id="IPR005824">
    <property type="entry name" value="KOW"/>
</dbReference>
<dbReference type="InterPro" id="IPR014722">
    <property type="entry name" value="Rib_uL2_dom2"/>
</dbReference>
<dbReference type="InterPro" id="IPR003256">
    <property type="entry name" value="Ribosomal_uL24"/>
</dbReference>
<dbReference type="InterPro" id="IPR005825">
    <property type="entry name" value="Ribosomal_uL24_CS"/>
</dbReference>
<dbReference type="InterPro" id="IPR041988">
    <property type="entry name" value="Ribosomal_uL24_KOW"/>
</dbReference>
<dbReference type="InterPro" id="IPR008991">
    <property type="entry name" value="Translation_prot_SH3-like_sf"/>
</dbReference>
<dbReference type="NCBIfam" id="TIGR01079">
    <property type="entry name" value="rplX_bact"/>
    <property type="match status" value="1"/>
</dbReference>
<dbReference type="PANTHER" id="PTHR12903">
    <property type="entry name" value="MITOCHONDRIAL RIBOSOMAL PROTEIN L24"/>
    <property type="match status" value="1"/>
</dbReference>
<dbReference type="Pfam" id="PF00467">
    <property type="entry name" value="KOW"/>
    <property type="match status" value="1"/>
</dbReference>
<dbReference type="Pfam" id="PF17136">
    <property type="entry name" value="ribosomal_L24"/>
    <property type="match status" value="1"/>
</dbReference>
<dbReference type="SMART" id="SM00739">
    <property type="entry name" value="KOW"/>
    <property type="match status" value="1"/>
</dbReference>
<dbReference type="SUPFAM" id="SSF50104">
    <property type="entry name" value="Translation proteins SH3-like domain"/>
    <property type="match status" value="1"/>
</dbReference>
<dbReference type="PROSITE" id="PS01108">
    <property type="entry name" value="RIBOSOMAL_L24"/>
    <property type="match status" value="1"/>
</dbReference>
<name>RL24_BUCCC</name>
<protein>
    <recommendedName>
        <fullName evidence="1">Large ribosomal subunit protein uL24</fullName>
    </recommendedName>
    <alternativeName>
        <fullName evidence="2">50S ribosomal protein L24</fullName>
    </alternativeName>
</protein>
<feature type="chain" id="PRO_1000141973" description="Large ribosomal subunit protein uL24">
    <location>
        <begin position="1"/>
        <end position="105"/>
    </location>
</feature>
<sequence length="105" mass="12102">MSYKIRSNDLVIVLTGKDKGKVGIVKKIYRSNNTVIVEGINIVKKHQKSIPEKQQSGGIISKELPIHISNVSIFNKKLKKSDKVEFFWHLGKKKRRFKSNKELIQ</sequence>